<sequence>MFKATARYIRVQPRKARLAAGLMRNLSVMEAQQQLNFSQLKAGRCLKKVLDSAVANAVLNENVKREQLSVIEVRVDAGPVYKRAKSKSRGGRSPILKRTSHLTVIVGEKER</sequence>
<evidence type="ECO:0000255" key="1">
    <source>
        <dbReference type="HAMAP-Rule" id="MF_01331"/>
    </source>
</evidence>
<evidence type="ECO:0000305" key="2"/>
<organism>
    <name type="scientific">Chlamydia caviae (strain ATCC VR-813 / DSM 19441 / 03DC25 / GPIC)</name>
    <name type="common">Chlamydophila caviae</name>
    <dbReference type="NCBI Taxonomy" id="227941"/>
    <lineage>
        <taxon>Bacteria</taxon>
        <taxon>Pseudomonadati</taxon>
        <taxon>Chlamydiota</taxon>
        <taxon>Chlamydiia</taxon>
        <taxon>Chlamydiales</taxon>
        <taxon>Chlamydiaceae</taxon>
        <taxon>Chlamydia/Chlamydophila group</taxon>
        <taxon>Chlamydia</taxon>
    </lineage>
</organism>
<protein>
    <recommendedName>
        <fullName evidence="1">Large ribosomal subunit protein uL22</fullName>
    </recommendedName>
    <alternativeName>
        <fullName evidence="2">50S ribosomal protein L22</fullName>
    </alternativeName>
</protein>
<accession>Q824P6</accession>
<keyword id="KW-0687">Ribonucleoprotein</keyword>
<keyword id="KW-0689">Ribosomal protein</keyword>
<keyword id="KW-0694">RNA-binding</keyword>
<keyword id="KW-0699">rRNA-binding</keyword>
<gene>
    <name evidence="1" type="primary">rplV</name>
    <name type="ordered locus">CCA_00098</name>
</gene>
<feature type="chain" id="PRO_0000125136" description="Large ribosomal subunit protein uL22">
    <location>
        <begin position="1"/>
        <end position="111"/>
    </location>
</feature>
<reference key="1">
    <citation type="journal article" date="2003" name="Nucleic Acids Res.">
        <title>Genome sequence of Chlamydophila caviae (Chlamydia psittaci GPIC): examining the role of niche-specific genes in the evolution of the Chlamydiaceae.</title>
        <authorList>
            <person name="Read T.D."/>
            <person name="Myers G.S.A."/>
            <person name="Brunham R.C."/>
            <person name="Nelson W.C."/>
            <person name="Paulsen I.T."/>
            <person name="Heidelberg J.F."/>
            <person name="Holtzapple E.K."/>
            <person name="Khouri H.M."/>
            <person name="Federova N.B."/>
            <person name="Carty H.A."/>
            <person name="Umayam L.A."/>
            <person name="Haft D.H."/>
            <person name="Peterson J.D."/>
            <person name="Beanan M.J."/>
            <person name="White O."/>
            <person name="Salzberg S.L."/>
            <person name="Hsia R.-C."/>
            <person name="McClarty G."/>
            <person name="Rank R.G."/>
            <person name="Bavoil P.M."/>
            <person name="Fraser C.M."/>
        </authorList>
    </citation>
    <scope>NUCLEOTIDE SEQUENCE [LARGE SCALE GENOMIC DNA]</scope>
    <source>
        <strain>ATCC VR-813 / DSM 19441 / 03DC25 / GPIC</strain>
    </source>
</reference>
<name>RL22_CHLCV</name>
<proteinExistence type="inferred from homology"/>
<dbReference type="EMBL" id="AE015925">
    <property type="protein sequence ID" value="AAP04850.1"/>
    <property type="molecule type" value="Genomic_DNA"/>
</dbReference>
<dbReference type="RefSeq" id="WP_011006071.1">
    <property type="nucleotide sequence ID" value="NC_003361.3"/>
</dbReference>
<dbReference type="SMR" id="Q824P6"/>
<dbReference type="STRING" id="227941.CCA_00098"/>
<dbReference type="KEGG" id="cca:CCA_00098"/>
<dbReference type="eggNOG" id="COG0091">
    <property type="taxonomic scope" value="Bacteria"/>
</dbReference>
<dbReference type="HOGENOM" id="CLU_083987_3_3_0"/>
<dbReference type="OrthoDB" id="9805969at2"/>
<dbReference type="Proteomes" id="UP000002193">
    <property type="component" value="Chromosome"/>
</dbReference>
<dbReference type="GO" id="GO:0022625">
    <property type="term" value="C:cytosolic large ribosomal subunit"/>
    <property type="evidence" value="ECO:0007669"/>
    <property type="project" value="TreeGrafter"/>
</dbReference>
<dbReference type="GO" id="GO:0019843">
    <property type="term" value="F:rRNA binding"/>
    <property type="evidence" value="ECO:0007669"/>
    <property type="project" value="UniProtKB-UniRule"/>
</dbReference>
<dbReference type="GO" id="GO:0003735">
    <property type="term" value="F:structural constituent of ribosome"/>
    <property type="evidence" value="ECO:0007669"/>
    <property type="project" value="InterPro"/>
</dbReference>
<dbReference type="GO" id="GO:0006412">
    <property type="term" value="P:translation"/>
    <property type="evidence" value="ECO:0007669"/>
    <property type="project" value="UniProtKB-UniRule"/>
</dbReference>
<dbReference type="Gene3D" id="3.90.470.10">
    <property type="entry name" value="Ribosomal protein L22/L17"/>
    <property type="match status" value="1"/>
</dbReference>
<dbReference type="HAMAP" id="MF_01331_B">
    <property type="entry name" value="Ribosomal_uL22_B"/>
    <property type="match status" value="1"/>
</dbReference>
<dbReference type="InterPro" id="IPR001063">
    <property type="entry name" value="Ribosomal_uL22"/>
</dbReference>
<dbReference type="InterPro" id="IPR005727">
    <property type="entry name" value="Ribosomal_uL22_bac/chlpt-type"/>
</dbReference>
<dbReference type="InterPro" id="IPR047867">
    <property type="entry name" value="Ribosomal_uL22_bac/org-type"/>
</dbReference>
<dbReference type="InterPro" id="IPR036394">
    <property type="entry name" value="Ribosomal_uL22_sf"/>
</dbReference>
<dbReference type="NCBIfam" id="TIGR01044">
    <property type="entry name" value="rplV_bact"/>
    <property type="match status" value="1"/>
</dbReference>
<dbReference type="PANTHER" id="PTHR13501">
    <property type="entry name" value="CHLOROPLAST 50S RIBOSOMAL PROTEIN L22-RELATED"/>
    <property type="match status" value="1"/>
</dbReference>
<dbReference type="PANTHER" id="PTHR13501:SF8">
    <property type="entry name" value="LARGE RIBOSOMAL SUBUNIT PROTEIN UL22M"/>
    <property type="match status" value="1"/>
</dbReference>
<dbReference type="Pfam" id="PF00237">
    <property type="entry name" value="Ribosomal_L22"/>
    <property type="match status" value="1"/>
</dbReference>
<dbReference type="SUPFAM" id="SSF54843">
    <property type="entry name" value="Ribosomal protein L22"/>
    <property type="match status" value="1"/>
</dbReference>
<comment type="function">
    <text evidence="1">This protein binds specifically to 23S rRNA; its binding is stimulated by other ribosomal proteins, e.g. L4, L17, and L20. It is important during the early stages of 50S assembly. It makes multiple contacts with different domains of the 23S rRNA in the assembled 50S subunit and ribosome (By similarity).</text>
</comment>
<comment type="function">
    <text evidence="1">The globular domain of the protein is located near the polypeptide exit tunnel on the outside of the subunit, while an extended beta-hairpin is found that lines the wall of the exit tunnel in the center of the 70S ribosome.</text>
</comment>
<comment type="subunit">
    <text evidence="1">Part of the 50S ribosomal subunit.</text>
</comment>
<comment type="similarity">
    <text evidence="1">Belongs to the universal ribosomal protein uL22 family.</text>
</comment>